<geneLocation type="chloroplast"/>
<evidence type="ECO:0000255" key="1">
    <source>
        <dbReference type="HAMAP-Rule" id="MF_01393"/>
    </source>
</evidence>
<organism>
    <name type="scientific">Ceratophyllum demersum</name>
    <name type="common">Rigid hornwort</name>
    <name type="synonym">Coontail</name>
    <dbReference type="NCBI Taxonomy" id="4428"/>
    <lineage>
        <taxon>Eukaryota</taxon>
        <taxon>Viridiplantae</taxon>
        <taxon>Streptophyta</taxon>
        <taxon>Embryophyta</taxon>
        <taxon>Tracheophyta</taxon>
        <taxon>Spermatophyta</taxon>
        <taxon>Magnoliopsida</taxon>
        <taxon>Ceratophyllales</taxon>
        <taxon>Ceratophyllaceae</taxon>
        <taxon>Ceratophyllum</taxon>
    </lineage>
</organism>
<proteinExistence type="inferred from homology"/>
<sequence length="247" mass="27107">MNVLPCSMNTLKGLYEISGVEVGQHFYWQIGGFQIHAQVLITSWVVIAILLGSAAIAVRNPQTIPTDGQNFFEYVLEFIRDLSKTQIGEDYGPWVPFIGTMFLFIFVSNWSGALLPWKIIQLPHGELAAPTNDINTTVALALLTSAAYFYAGLTKKGLGYFGKYIQPTPILLPINILEDFTKPLSLSFRLFGNILADELVVVVLVSLVPLVVPIPVMFLGLFTSGIQALIFATLAAAYIGESMEGHH</sequence>
<protein>
    <recommendedName>
        <fullName evidence="1">ATP synthase subunit a, chloroplastic</fullName>
    </recommendedName>
    <alternativeName>
        <fullName evidence="1">ATP synthase F0 sector subunit a</fullName>
    </alternativeName>
    <alternativeName>
        <fullName evidence="1">F-ATPase subunit IV</fullName>
    </alternativeName>
</protein>
<dbReference type="EMBL" id="EF614270">
    <property type="protein sequence ID" value="ABQ81438.1"/>
    <property type="molecule type" value="Genomic_DNA"/>
</dbReference>
<dbReference type="RefSeq" id="YP_001542435.1">
    <property type="nucleotide sequence ID" value="NC_009962.1"/>
</dbReference>
<dbReference type="SMR" id="A8SE70"/>
<dbReference type="GeneID" id="5729385"/>
<dbReference type="GO" id="GO:0009535">
    <property type="term" value="C:chloroplast thylakoid membrane"/>
    <property type="evidence" value="ECO:0007669"/>
    <property type="project" value="UniProtKB-SubCell"/>
</dbReference>
<dbReference type="GO" id="GO:0005886">
    <property type="term" value="C:plasma membrane"/>
    <property type="evidence" value="ECO:0007669"/>
    <property type="project" value="UniProtKB-UniRule"/>
</dbReference>
<dbReference type="GO" id="GO:0045259">
    <property type="term" value="C:proton-transporting ATP synthase complex"/>
    <property type="evidence" value="ECO:0007669"/>
    <property type="project" value="UniProtKB-KW"/>
</dbReference>
<dbReference type="GO" id="GO:0046933">
    <property type="term" value="F:proton-transporting ATP synthase activity, rotational mechanism"/>
    <property type="evidence" value="ECO:0007669"/>
    <property type="project" value="UniProtKB-UniRule"/>
</dbReference>
<dbReference type="CDD" id="cd00310">
    <property type="entry name" value="ATP-synt_Fo_a_6"/>
    <property type="match status" value="1"/>
</dbReference>
<dbReference type="FunFam" id="1.20.120.220:FF:000001">
    <property type="entry name" value="ATP synthase subunit a, chloroplastic"/>
    <property type="match status" value="1"/>
</dbReference>
<dbReference type="Gene3D" id="1.20.120.220">
    <property type="entry name" value="ATP synthase, F0 complex, subunit A"/>
    <property type="match status" value="1"/>
</dbReference>
<dbReference type="HAMAP" id="MF_01393">
    <property type="entry name" value="ATP_synth_a_bact"/>
    <property type="match status" value="1"/>
</dbReference>
<dbReference type="InterPro" id="IPR045082">
    <property type="entry name" value="ATP_syn_F0_a_bact/chloroplast"/>
</dbReference>
<dbReference type="InterPro" id="IPR000568">
    <property type="entry name" value="ATP_synth_F0_asu"/>
</dbReference>
<dbReference type="InterPro" id="IPR023011">
    <property type="entry name" value="ATP_synth_F0_asu_AS"/>
</dbReference>
<dbReference type="InterPro" id="IPR035908">
    <property type="entry name" value="F0_ATP_A_sf"/>
</dbReference>
<dbReference type="NCBIfam" id="TIGR01131">
    <property type="entry name" value="ATP_synt_6_or_A"/>
    <property type="match status" value="1"/>
</dbReference>
<dbReference type="PANTHER" id="PTHR42823">
    <property type="entry name" value="ATP SYNTHASE SUBUNIT A, CHLOROPLASTIC"/>
    <property type="match status" value="1"/>
</dbReference>
<dbReference type="PANTHER" id="PTHR42823:SF3">
    <property type="entry name" value="ATP SYNTHASE SUBUNIT A, CHLOROPLASTIC"/>
    <property type="match status" value="1"/>
</dbReference>
<dbReference type="Pfam" id="PF00119">
    <property type="entry name" value="ATP-synt_A"/>
    <property type="match status" value="1"/>
</dbReference>
<dbReference type="PRINTS" id="PR00123">
    <property type="entry name" value="ATPASEA"/>
</dbReference>
<dbReference type="SUPFAM" id="SSF81336">
    <property type="entry name" value="F1F0 ATP synthase subunit A"/>
    <property type="match status" value="1"/>
</dbReference>
<dbReference type="PROSITE" id="PS00449">
    <property type="entry name" value="ATPASE_A"/>
    <property type="match status" value="1"/>
</dbReference>
<accession>A8SE70</accession>
<reference key="1">
    <citation type="journal article" date="2007" name="Proc. Natl. Acad. Sci. U.S.A.">
        <title>Using plastid genome-scale data to resolve enigmatic relationships among basal angiosperms.</title>
        <authorList>
            <person name="Moore M.J."/>
            <person name="Bell C.D."/>
            <person name="Soltis P.S."/>
            <person name="Soltis D.E."/>
        </authorList>
    </citation>
    <scope>NUCLEOTIDE SEQUENCE [LARGE SCALE GENOMIC DNA]</scope>
</reference>
<feature type="chain" id="PRO_0000362537" description="ATP synthase subunit a, chloroplastic">
    <location>
        <begin position="1"/>
        <end position="247"/>
    </location>
</feature>
<feature type="transmembrane region" description="Helical" evidence="1">
    <location>
        <begin position="38"/>
        <end position="58"/>
    </location>
</feature>
<feature type="transmembrane region" description="Helical" evidence="1">
    <location>
        <begin position="95"/>
        <end position="115"/>
    </location>
</feature>
<feature type="transmembrane region" description="Helical" evidence="1">
    <location>
        <begin position="134"/>
        <end position="154"/>
    </location>
</feature>
<feature type="transmembrane region" description="Helical" evidence="1">
    <location>
        <begin position="199"/>
        <end position="219"/>
    </location>
</feature>
<feature type="transmembrane region" description="Helical" evidence="1">
    <location>
        <begin position="220"/>
        <end position="240"/>
    </location>
</feature>
<name>ATPI_CERDE</name>
<comment type="function">
    <text evidence="1">Key component of the proton channel; it plays a direct role in the translocation of protons across the membrane.</text>
</comment>
<comment type="subunit">
    <text evidence="1">F-type ATPases have 2 components, CF(1) - the catalytic core - and CF(0) - the membrane proton channel. CF(1) has five subunits: alpha(3), beta(3), gamma(1), delta(1), epsilon(1). CF(0) has four main subunits: a, b, b' and c.</text>
</comment>
<comment type="subcellular location">
    <subcellularLocation>
        <location evidence="1">Plastid</location>
        <location evidence="1">Chloroplast thylakoid membrane</location>
        <topology evidence="1">Multi-pass membrane protein</topology>
    </subcellularLocation>
</comment>
<comment type="similarity">
    <text evidence="1">Belongs to the ATPase A chain family.</text>
</comment>
<gene>
    <name evidence="1" type="primary">atpI</name>
</gene>
<keyword id="KW-0066">ATP synthesis</keyword>
<keyword id="KW-0138">CF(0)</keyword>
<keyword id="KW-0150">Chloroplast</keyword>
<keyword id="KW-0375">Hydrogen ion transport</keyword>
<keyword id="KW-0406">Ion transport</keyword>
<keyword id="KW-0472">Membrane</keyword>
<keyword id="KW-0934">Plastid</keyword>
<keyword id="KW-0793">Thylakoid</keyword>
<keyword id="KW-0812">Transmembrane</keyword>
<keyword id="KW-1133">Transmembrane helix</keyword>
<keyword id="KW-0813">Transport</keyword>